<keyword id="KW-0067">ATP-binding</keyword>
<keyword id="KW-0347">Helicase</keyword>
<keyword id="KW-0378">Hydrolase</keyword>
<keyword id="KW-0547">Nucleotide-binding</keyword>
<keyword id="KW-1185">Reference proteome</keyword>
<accession>O10302</accession>
<sequence>MDTFKVQLQEFFSAGDGADDAPCLDAPNLLEHQKRGIEWMRRRERRGRPHGGVLADDMGLGKTLSVMRLIANDGDDAHKTLIVCPLSLLNHWTAEAKKHNLPLNLRQFHGGDLDESFDDAKAVAITYDTLRAHHKHYKTAGRASGLLARHWHRVVLDEAHVIKNHQTGVHAAACALSADNRWCITGTPIHNRHWDMYAIIHFLRCRPFDNVGVWRMLNRNNDTNRIKSVVNKIVLKRNKAEIALDIPQHDVQDVHVRFDEAEARVYNELKSASQRAYDDAVASADKAGGMQDVLWLLCRLRQVCCHPALTKCAAMFPEHAHIFEPAYESSKCRRALELVQRVLDTPDDKVVLVSQWVEFLQLVAGLLRRRGVPILLYTGQLRVEERTAVENQFNAADSPYRVLLMSIKCGGVGLNLTGGNHIIMLEPHWNPQIELQAQDRIHRMGQKKRTYVYKMIVDEENSIERYMKARQDKKLTFVNKVFDRTALNYEDIKKFFSL</sequence>
<reference key="1">
    <citation type="journal article" date="1997" name="Virology">
        <title>The sequence of the Orgyia pseudotsugata multinucleocapsid nuclear polyhedrosis virus genome.</title>
        <authorList>
            <person name="Ahrens C.H."/>
            <person name="Russell R.R."/>
            <person name="Funk C.J."/>
            <person name="Evans J."/>
            <person name="Harwood S."/>
            <person name="Rohrmann G.F."/>
        </authorList>
    </citation>
    <scope>NUCLEOTIDE SEQUENCE [LARGE SCALE GENOMIC DNA]</scope>
</reference>
<protein>
    <recommendedName>
        <fullName>Probable global transactivator</fullName>
        <ecNumber>3.6.4.-</ecNumber>
    </recommendedName>
    <alternativeName>
        <fullName>ATP-dependent helicase GTA</fullName>
    </alternativeName>
</protein>
<name>GTA_NPVOP</name>
<proteinExistence type="inferred from homology"/>
<evidence type="ECO:0000255" key="1">
    <source>
        <dbReference type="PROSITE-ProRule" id="PRU00541"/>
    </source>
</evidence>
<evidence type="ECO:0000255" key="2">
    <source>
        <dbReference type="PROSITE-ProRule" id="PRU00542"/>
    </source>
</evidence>
<evidence type="ECO:0000305" key="3"/>
<gene>
    <name type="primary">GTA</name>
    <name type="ORF">ORF47</name>
</gene>
<dbReference type="EC" id="3.6.4.-"/>
<dbReference type="EMBL" id="U75930">
    <property type="protein sequence ID" value="AAC59046.1"/>
    <property type="molecule type" value="Genomic_DNA"/>
</dbReference>
<dbReference type="RefSeq" id="NP_046203.1">
    <property type="nucleotide sequence ID" value="NC_001875.2"/>
</dbReference>
<dbReference type="SMR" id="O10302"/>
<dbReference type="KEGG" id="vg:912031"/>
<dbReference type="OrthoDB" id="2514at10239"/>
<dbReference type="Proteomes" id="UP000009248">
    <property type="component" value="Genome"/>
</dbReference>
<dbReference type="GO" id="GO:0005524">
    <property type="term" value="F:ATP binding"/>
    <property type="evidence" value="ECO:0007669"/>
    <property type="project" value="UniProtKB-KW"/>
</dbReference>
<dbReference type="GO" id="GO:0008094">
    <property type="term" value="F:ATP-dependent activity, acting on DNA"/>
    <property type="evidence" value="ECO:0007669"/>
    <property type="project" value="TreeGrafter"/>
</dbReference>
<dbReference type="GO" id="GO:0004386">
    <property type="term" value="F:helicase activity"/>
    <property type="evidence" value="ECO:0007669"/>
    <property type="project" value="UniProtKB-KW"/>
</dbReference>
<dbReference type="GO" id="GO:0016787">
    <property type="term" value="F:hydrolase activity"/>
    <property type="evidence" value="ECO:0007669"/>
    <property type="project" value="UniProtKB-KW"/>
</dbReference>
<dbReference type="GO" id="GO:0006281">
    <property type="term" value="P:DNA repair"/>
    <property type="evidence" value="ECO:0007669"/>
    <property type="project" value="TreeGrafter"/>
</dbReference>
<dbReference type="CDD" id="cd18008">
    <property type="entry name" value="DEXDc_SHPRH-like"/>
    <property type="match status" value="1"/>
</dbReference>
<dbReference type="CDD" id="cd18793">
    <property type="entry name" value="SF2_C_SNF"/>
    <property type="match status" value="1"/>
</dbReference>
<dbReference type="Gene3D" id="3.40.50.300">
    <property type="entry name" value="P-loop containing nucleotide triphosphate hydrolases"/>
    <property type="match status" value="1"/>
</dbReference>
<dbReference type="Gene3D" id="3.40.50.10810">
    <property type="entry name" value="Tandem AAA-ATPase domain"/>
    <property type="match status" value="1"/>
</dbReference>
<dbReference type="InterPro" id="IPR014001">
    <property type="entry name" value="Helicase_ATP-bd"/>
</dbReference>
<dbReference type="InterPro" id="IPR001650">
    <property type="entry name" value="Helicase_C-like"/>
</dbReference>
<dbReference type="InterPro" id="IPR027417">
    <property type="entry name" value="P-loop_NTPase"/>
</dbReference>
<dbReference type="InterPro" id="IPR038718">
    <property type="entry name" value="SNF2-like_sf"/>
</dbReference>
<dbReference type="InterPro" id="IPR049730">
    <property type="entry name" value="SNF2/RAD54-like_C"/>
</dbReference>
<dbReference type="InterPro" id="IPR000330">
    <property type="entry name" value="SNF2_N"/>
</dbReference>
<dbReference type="InterPro" id="IPR050628">
    <property type="entry name" value="SNF2_RAD54_helicase_TF"/>
</dbReference>
<dbReference type="PANTHER" id="PTHR45626:SF17">
    <property type="entry name" value="HELICASE-LIKE TRANSCRIPTION FACTOR"/>
    <property type="match status" value="1"/>
</dbReference>
<dbReference type="PANTHER" id="PTHR45626">
    <property type="entry name" value="TRANSCRIPTION TERMINATION FACTOR 2-RELATED"/>
    <property type="match status" value="1"/>
</dbReference>
<dbReference type="Pfam" id="PF00271">
    <property type="entry name" value="Helicase_C"/>
    <property type="match status" value="1"/>
</dbReference>
<dbReference type="Pfam" id="PF00176">
    <property type="entry name" value="SNF2-rel_dom"/>
    <property type="match status" value="1"/>
</dbReference>
<dbReference type="SMART" id="SM00487">
    <property type="entry name" value="DEXDc"/>
    <property type="match status" value="1"/>
</dbReference>
<dbReference type="SMART" id="SM00490">
    <property type="entry name" value="HELICc"/>
    <property type="match status" value="1"/>
</dbReference>
<dbReference type="SUPFAM" id="SSF52540">
    <property type="entry name" value="P-loop containing nucleoside triphosphate hydrolases"/>
    <property type="match status" value="2"/>
</dbReference>
<dbReference type="PROSITE" id="PS51192">
    <property type="entry name" value="HELICASE_ATP_BIND_1"/>
    <property type="match status" value="1"/>
</dbReference>
<dbReference type="PROSITE" id="PS51194">
    <property type="entry name" value="HELICASE_CTER"/>
    <property type="match status" value="1"/>
</dbReference>
<organismHost>
    <name type="scientific">Orgyia pseudotsugata</name>
    <name type="common">Douglas-fir tussock moth</name>
    <dbReference type="NCBI Taxonomy" id="33414"/>
</organismHost>
<feature type="chain" id="PRO_0000074316" description="Probable global transactivator">
    <location>
        <begin position="1"/>
        <end position="498"/>
    </location>
</feature>
<feature type="domain" description="Helicase ATP-binding" evidence="1">
    <location>
        <begin position="43"/>
        <end position="206"/>
    </location>
</feature>
<feature type="domain" description="Helicase C-terminal" evidence="2">
    <location>
        <begin position="337"/>
        <end position="493"/>
    </location>
</feature>
<feature type="short sequence motif" description="DEAH box">
    <location>
        <begin position="157"/>
        <end position="160"/>
    </location>
</feature>
<feature type="binding site" evidence="1">
    <location>
        <begin position="55"/>
        <end position="63"/>
    </location>
    <ligand>
        <name>ATP</name>
        <dbReference type="ChEBI" id="CHEBI:30616"/>
    </ligand>
</feature>
<organism>
    <name type="scientific">Orgyia pseudotsugata multicapsid polyhedrosis virus</name>
    <name type="common">OpMNPV</name>
    <dbReference type="NCBI Taxonomy" id="262177"/>
    <lineage>
        <taxon>Viruses</taxon>
        <taxon>Viruses incertae sedis</taxon>
        <taxon>Naldaviricetes</taxon>
        <taxon>Lefavirales</taxon>
        <taxon>Baculoviridae</taxon>
        <taxon>Alphabaculovirus</taxon>
        <taxon>Alphabaculovirus orpseudotsugatae</taxon>
    </lineage>
</organism>
<comment type="similarity">
    <text evidence="3">Belongs to the SNF2/RAD54 helicase family.</text>
</comment>